<comment type="function">
    <text evidence="1 5">Catalyzes methylation of the sphingoid base component of glucosylceramides (GluCers) at the C9-position (PubMed:27479571). Sphingolipid C9-methylation requires 4,8-desaturated ceramides as substrates (By similarity). Glucosylceramides play important roles in growth, differentiation and pathogenicity (PubMed:27479571). The methyl group at the C9-position distinguishes fungal glucosylceramides from those of plants and animals and may thus play a role in host-pathogen interactions enabling the host to recognize the fungal attack and initiate specific defense responses (By similarity).</text>
</comment>
<comment type="catalytic activity">
    <reaction evidence="1">
        <text>a (4E,8E)-4-sphinga-4,8-dienine ceramide + S-adenosyl-L-methionine = a 9-methyl-(4E,8E)-sphinga-4,8-dienine ceramide + S-adenosyl-L-homocysteine + H(+)</text>
        <dbReference type="Rhea" id="RHEA:46804"/>
        <dbReference type="ChEBI" id="CHEBI:15378"/>
        <dbReference type="ChEBI" id="CHEBI:57856"/>
        <dbReference type="ChEBI" id="CHEBI:59789"/>
        <dbReference type="ChEBI" id="CHEBI:85953"/>
        <dbReference type="ChEBI" id="CHEBI:87033"/>
        <dbReference type="EC" id="2.1.1.317"/>
    </reaction>
    <physiologicalReaction direction="left-to-right" evidence="1">
        <dbReference type="Rhea" id="RHEA:46805"/>
    </physiologicalReaction>
</comment>
<comment type="pathway">
    <text evidence="5">Lipid metabolism; sphingolipid metabolism.</text>
</comment>
<comment type="subcellular location">
    <subcellularLocation>
        <location evidence="3">Membrane</location>
        <topology evidence="3">Multi-pass membrane protein</topology>
    </subcellularLocation>
</comment>
<comment type="disruption phenotype">
    <text evidence="5">Leads to increased resistance to cell-wall-damaging agents, such as calcofluor white (CFW) and Congo red (CR) (PubMed:27479571). Accumulates unmethylated glucosylceramides (PubMed:27479571).</text>
</comment>
<comment type="similarity">
    <text evidence="7">Belongs to the CFA/CMAS family.</text>
</comment>
<proteinExistence type="inferred from homology"/>
<keyword id="KW-0325">Glycoprotein</keyword>
<keyword id="KW-0444">Lipid biosynthesis</keyword>
<keyword id="KW-0443">Lipid metabolism</keyword>
<keyword id="KW-0472">Membrane</keyword>
<keyword id="KW-0489">Methyltransferase</keyword>
<keyword id="KW-1185">Reference proteome</keyword>
<keyword id="KW-0949">S-adenosyl-L-methionine</keyword>
<keyword id="KW-0746">Sphingolipid metabolism</keyword>
<keyword id="KW-0808">Transferase</keyword>
<keyword id="KW-0812">Transmembrane</keyword>
<keyword id="KW-1133">Transmembrane helix</keyword>
<keyword id="KW-0843">Virulence</keyword>
<gene>
    <name evidence="6" type="primary">smtA</name>
    <name type="ORF">AN5688</name>
    <name type="ORF">ANIA_05688</name>
</gene>
<dbReference type="EC" id="2.1.1.317" evidence="1"/>
<dbReference type="EMBL" id="AACD01000098">
    <property type="protein sequence ID" value="EAA62781.1"/>
    <property type="molecule type" value="Genomic_DNA"/>
</dbReference>
<dbReference type="EMBL" id="BN001305">
    <property type="protein sequence ID" value="CBF81402.1"/>
    <property type="molecule type" value="Genomic_DNA"/>
</dbReference>
<dbReference type="RefSeq" id="XP_663292.1">
    <property type="nucleotide sequence ID" value="XM_658200.1"/>
</dbReference>
<dbReference type="SMR" id="A0A1U8QYZ5"/>
<dbReference type="STRING" id="227321.Q5B192"/>
<dbReference type="EnsemblFungi" id="CBF81402">
    <property type="protein sequence ID" value="CBF81402"/>
    <property type="gene ID" value="ANIA_05688"/>
</dbReference>
<dbReference type="GeneID" id="2871978"/>
<dbReference type="KEGG" id="ani:ANIA_05688"/>
<dbReference type="VEuPathDB" id="FungiDB:AN5688"/>
<dbReference type="eggNOG" id="ENOG502QS47">
    <property type="taxonomic scope" value="Eukaryota"/>
</dbReference>
<dbReference type="HOGENOM" id="CLU_026434_5_0_1"/>
<dbReference type="OMA" id="GFKTWLF"/>
<dbReference type="OrthoDB" id="412182at2759"/>
<dbReference type="BRENDA" id="2.1.1.317">
    <property type="organism ID" value="517"/>
</dbReference>
<dbReference type="UniPathway" id="UPA00222"/>
<dbReference type="Proteomes" id="UP000000560">
    <property type="component" value="Chromosome V"/>
</dbReference>
<dbReference type="GO" id="GO:0016020">
    <property type="term" value="C:membrane"/>
    <property type="evidence" value="ECO:0007669"/>
    <property type="project" value="UniProtKB-SubCell"/>
</dbReference>
<dbReference type="GO" id="GO:0008168">
    <property type="term" value="F:methyltransferase activity"/>
    <property type="evidence" value="ECO:0000318"/>
    <property type="project" value="GO_Central"/>
</dbReference>
<dbReference type="GO" id="GO:0006679">
    <property type="term" value="P:glucosylceramide biosynthetic process"/>
    <property type="evidence" value="ECO:0000318"/>
    <property type="project" value="GO_Central"/>
</dbReference>
<dbReference type="GO" id="GO:0032259">
    <property type="term" value="P:methylation"/>
    <property type="evidence" value="ECO:0007669"/>
    <property type="project" value="UniProtKB-KW"/>
</dbReference>
<dbReference type="CDD" id="cd02440">
    <property type="entry name" value="AdoMet_MTases"/>
    <property type="match status" value="1"/>
</dbReference>
<dbReference type="Gene3D" id="3.40.50.150">
    <property type="entry name" value="Vaccinia Virus protein VP39"/>
    <property type="match status" value="1"/>
</dbReference>
<dbReference type="InterPro" id="IPR029063">
    <property type="entry name" value="SAM-dependent_MTases_sf"/>
</dbReference>
<dbReference type="InterPro" id="IPR052290">
    <property type="entry name" value="Sphingo_C9-MT"/>
</dbReference>
<dbReference type="PANTHER" id="PTHR45197:SF1">
    <property type="entry name" value="SPHINGOLIPID C9-METHYLTRANSFERASE A-RELATED"/>
    <property type="match status" value="1"/>
</dbReference>
<dbReference type="PANTHER" id="PTHR45197">
    <property type="entry name" value="SYNTHASE, PUTATIVE (AFU_ORTHOLOGUE AFUA_7G04190)-RELATED"/>
    <property type="match status" value="1"/>
</dbReference>
<dbReference type="Pfam" id="PF02353">
    <property type="entry name" value="CMAS"/>
    <property type="match status" value="1"/>
</dbReference>
<dbReference type="SUPFAM" id="SSF53335">
    <property type="entry name" value="S-adenosyl-L-methionine-dependent methyltransferases"/>
    <property type="match status" value="1"/>
</dbReference>
<sequence>MTNIHPESPEDFEFIETPAASCTTPADDCGVRTTSYPAIKNAPVPADAAGSDSFSNTLLILLLVVIPWYTARQIGGGLKTTIFFAIFTTIPILMAFWSIASSISPRKNEKAKYAGRPVEHYLHFHSEHDRATYRGKSKIPMEVFYEKYFAGEVDFKMDALEALEFRHDWANFRFTMGLFKHFLFGFIPELLVHSRSQDEEQVRDHYDRGDDFYAWFLGPRMIYTSGIISDIKKEETLEQLQDNKLAVVCEKVGLKPGDTVLDLGCGWGTLAKYASVHYGAQVTGITLGRNQTAWGNKGLRAAGIDESQSRILCMDYRDAPRVPGGYKKITCLEMAEHVGVRHFGSFLAQVNEMLDDDGVFFLQIAGLRKSWQYEDLIWGLFMNKYIFPGADASTPLGFVVDKLEAAGFEIKGIDTIGVHYSATLWRWYRNWLGNGEKVKAKYGERWYRIWEYFLAYSTITSRQGGATCWQITLVKNINSTHRVEGINSQYGLTGAREAAIASVGKGSLPSAHVTFKA</sequence>
<evidence type="ECO:0000250" key="1">
    <source>
        <dbReference type="UniProtKB" id="I1RNL0"/>
    </source>
</evidence>
<evidence type="ECO:0000250" key="2">
    <source>
        <dbReference type="UniProtKB" id="P9WPB7"/>
    </source>
</evidence>
<evidence type="ECO:0000255" key="3"/>
<evidence type="ECO:0000255" key="4">
    <source>
        <dbReference type="PROSITE-ProRule" id="PRU00498"/>
    </source>
</evidence>
<evidence type="ECO:0000269" key="5">
    <source>
    </source>
</evidence>
<evidence type="ECO:0000303" key="6">
    <source>
    </source>
</evidence>
<evidence type="ECO:0000305" key="7"/>
<accession>A0A1U8QYZ5</accession>
<accession>C8VFQ5</accession>
<accession>Q5B192</accession>
<organism>
    <name type="scientific">Emericella nidulans (strain FGSC A4 / ATCC 38163 / CBS 112.46 / NRRL 194 / M139)</name>
    <name type="common">Aspergillus nidulans</name>
    <dbReference type="NCBI Taxonomy" id="227321"/>
    <lineage>
        <taxon>Eukaryota</taxon>
        <taxon>Fungi</taxon>
        <taxon>Dikarya</taxon>
        <taxon>Ascomycota</taxon>
        <taxon>Pezizomycotina</taxon>
        <taxon>Eurotiomycetes</taxon>
        <taxon>Eurotiomycetidae</taxon>
        <taxon>Eurotiales</taxon>
        <taxon>Aspergillaceae</taxon>
        <taxon>Aspergillus</taxon>
        <taxon>Aspergillus subgen. Nidulantes</taxon>
    </lineage>
</organism>
<name>SMTA_EMENI</name>
<protein>
    <recommendedName>
        <fullName evidence="6">Sphingolipid C9-methyltransferase A</fullName>
        <ecNumber evidence="1">2.1.1.317</ecNumber>
    </recommendedName>
</protein>
<feature type="chain" id="PRO_0000457167" description="Sphingolipid C9-methyltransferase A">
    <location>
        <begin position="1"/>
        <end position="517"/>
    </location>
</feature>
<feature type="transmembrane region" description="Helical" evidence="3">
    <location>
        <begin position="58"/>
        <end position="78"/>
    </location>
</feature>
<feature type="transmembrane region" description="Helical" evidence="3">
    <location>
        <begin position="80"/>
        <end position="100"/>
    </location>
</feature>
<feature type="binding site" evidence="2">
    <location>
        <begin position="223"/>
        <end position="224"/>
    </location>
    <ligand>
        <name>S-adenosyl-L-methionine</name>
        <dbReference type="ChEBI" id="CHEBI:59789"/>
    </ligand>
</feature>
<feature type="binding site" evidence="2">
    <location>
        <begin position="286"/>
        <end position="291"/>
    </location>
    <ligand>
        <name>S-adenosyl-L-methionine</name>
        <dbReference type="ChEBI" id="CHEBI:59789"/>
    </ligand>
</feature>
<feature type="binding site" evidence="2">
    <location>
        <begin position="316"/>
        <end position="317"/>
    </location>
    <ligand>
        <name>S-adenosyl-L-methionine</name>
        <dbReference type="ChEBI" id="CHEBI:59789"/>
    </ligand>
</feature>
<feature type="glycosylation site" description="N-linked (GlcNAc...) asparagine" evidence="4">
    <location>
        <position position="290"/>
    </location>
</feature>
<feature type="glycosylation site" description="N-linked (GlcNAc...) asparagine" evidence="4">
    <location>
        <position position="478"/>
    </location>
</feature>
<reference key="1">
    <citation type="journal article" date="2005" name="Nature">
        <title>Sequencing of Aspergillus nidulans and comparative analysis with A. fumigatus and A. oryzae.</title>
        <authorList>
            <person name="Galagan J.E."/>
            <person name="Calvo S.E."/>
            <person name="Cuomo C."/>
            <person name="Ma L.-J."/>
            <person name="Wortman J.R."/>
            <person name="Batzoglou S."/>
            <person name="Lee S.-I."/>
            <person name="Bastuerkmen M."/>
            <person name="Spevak C.C."/>
            <person name="Clutterbuck J."/>
            <person name="Kapitonov V."/>
            <person name="Jurka J."/>
            <person name="Scazzocchio C."/>
            <person name="Farman M.L."/>
            <person name="Butler J."/>
            <person name="Purcell S."/>
            <person name="Harris S."/>
            <person name="Braus G.H."/>
            <person name="Draht O."/>
            <person name="Busch S."/>
            <person name="D'Enfert C."/>
            <person name="Bouchier C."/>
            <person name="Goldman G.H."/>
            <person name="Bell-Pedersen D."/>
            <person name="Griffiths-Jones S."/>
            <person name="Doonan J.H."/>
            <person name="Yu J."/>
            <person name="Vienken K."/>
            <person name="Pain A."/>
            <person name="Freitag M."/>
            <person name="Selker E.U."/>
            <person name="Archer D.B."/>
            <person name="Penalva M.A."/>
            <person name="Oakley B.R."/>
            <person name="Momany M."/>
            <person name="Tanaka T."/>
            <person name="Kumagai T."/>
            <person name="Asai K."/>
            <person name="Machida M."/>
            <person name="Nierman W.C."/>
            <person name="Denning D.W."/>
            <person name="Caddick M.X."/>
            <person name="Hynes M."/>
            <person name="Paoletti M."/>
            <person name="Fischer R."/>
            <person name="Miller B.L."/>
            <person name="Dyer P.S."/>
            <person name="Sachs M.S."/>
            <person name="Osmani S.A."/>
            <person name="Birren B.W."/>
        </authorList>
    </citation>
    <scope>NUCLEOTIDE SEQUENCE [LARGE SCALE GENOMIC DNA]</scope>
    <source>
        <strain>FGSC A4 / ATCC 38163 / CBS 112.46 / NRRL 194 / M139</strain>
    </source>
</reference>
<reference key="2">
    <citation type="journal article" date="2009" name="Fungal Genet. Biol.">
        <title>The 2008 update of the Aspergillus nidulans genome annotation: a community effort.</title>
        <authorList>
            <person name="Wortman J.R."/>
            <person name="Gilsenan J.M."/>
            <person name="Joardar V."/>
            <person name="Deegan J."/>
            <person name="Clutterbuck J."/>
            <person name="Andersen M.R."/>
            <person name="Archer D."/>
            <person name="Bencina M."/>
            <person name="Braus G."/>
            <person name="Coutinho P."/>
            <person name="von Dohren H."/>
            <person name="Doonan J."/>
            <person name="Driessen A.J."/>
            <person name="Durek P."/>
            <person name="Espeso E."/>
            <person name="Fekete E."/>
            <person name="Flipphi M."/>
            <person name="Estrada C.G."/>
            <person name="Geysens S."/>
            <person name="Goldman G."/>
            <person name="de Groot P.W."/>
            <person name="Hansen K."/>
            <person name="Harris S.D."/>
            <person name="Heinekamp T."/>
            <person name="Helmstaedt K."/>
            <person name="Henrissat B."/>
            <person name="Hofmann G."/>
            <person name="Homan T."/>
            <person name="Horio T."/>
            <person name="Horiuchi H."/>
            <person name="James S."/>
            <person name="Jones M."/>
            <person name="Karaffa L."/>
            <person name="Karanyi Z."/>
            <person name="Kato M."/>
            <person name="Keller N."/>
            <person name="Kelly D.E."/>
            <person name="Kiel J.A."/>
            <person name="Kim J.M."/>
            <person name="van der Klei I.J."/>
            <person name="Klis F.M."/>
            <person name="Kovalchuk A."/>
            <person name="Krasevec N."/>
            <person name="Kubicek C.P."/>
            <person name="Liu B."/>
            <person name="Maccabe A."/>
            <person name="Meyer V."/>
            <person name="Mirabito P."/>
            <person name="Miskei M."/>
            <person name="Mos M."/>
            <person name="Mullins J."/>
            <person name="Nelson D.R."/>
            <person name="Nielsen J."/>
            <person name="Oakley B.R."/>
            <person name="Osmani S.A."/>
            <person name="Pakula T."/>
            <person name="Paszewski A."/>
            <person name="Paulsen I."/>
            <person name="Pilsyk S."/>
            <person name="Pocsi I."/>
            <person name="Punt P.J."/>
            <person name="Ram A.F."/>
            <person name="Ren Q."/>
            <person name="Robellet X."/>
            <person name="Robson G."/>
            <person name="Seiboth B."/>
            <person name="van Solingen P."/>
            <person name="Specht T."/>
            <person name="Sun J."/>
            <person name="Taheri-Talesh N."/>
            <person name="Takeshita N."/>
            <person name="Ussery D."/>
            <person name="vanKuyk P.A."/>
            <person name="Visser H."/>
            <person name="van de Vondervoort P.J."/>
            <person name="de Vries R.P."/>
            <person name="Walton J."/>
            <person name="Xiang X."/>
            <person name="Xiong Y."/>
            <person name="Zeng A.P."/>
            <person name="Brandt B.W."/>
            <person name="Cornell M.J."/>
            <person name="van den Hondel C.A."/>
            <person name="Visser J."/>
            <person name="Oliver S.G."/>
            <person name="Turner G."/>
        </authorList>
    </citation>
    <scope>GENOME REANNOTATION</scope>
    <source>
        <strain>FGSC A4 / ATCC 38163 / CBS 112.46 / NRRL 194 / M139</strain>
    </source>
</reference>
<reference key="3">
    <citation type="journal article" date="2016" name="Mol. Microbiol.">
        <title>Functional characterization of the Aspergillus nidulans glucosylceramide pathway reveals that LCB Delta8-desaturation and C9-methylation are relevant to filamentous growth, lipid raft localization and Psd1 defensin activity.</title>
        <authorList>
            <person name="Fernandes C.M."/>
            <person name="de Castro P.A."/>
            <person name="Singh A."/>
            <person name="Fonseca F.L."/>
            <person name="Pereira M.D."/>
            <person name="Vila T.V."/>
            <person name="Atella G.C."/>
            <person name="Rozental S."/>
            <person name="Savoldi M."/>
            <person name="Del Poeta M."/>
            <person name="Goldman G.H."/>
            <person name="Kurtenbach E."/>
        </authorList>
    </citation>
    <scope>FUNCTION</scope>
    <scope>PATHWAY</scope>
    <scope>DISRUPTION PHENOTYPE</scope>
</reference>